<sequence>MPVSDSGFDNSSKTMKDDTIPTEDYEEITKESEMGDATKITSKIDANVIEKKDTDSENNITIAQDDEKVSWLQRVVEFFEVKNDSTDLADHKPENPIRTFKDLQESLRSTYLYNTDLRPVEAKRRTWTWKQYIFFWISGSFNVNTWQISATGLQLGLNWWQTWICIWVGYTFVAFFLILGSKVGNNYHISFPISSRVSFGIYFSIWIVINRVVMACVWNSTLAYIGSQCVQLMLKAIFGTNLNTRIKDTIKNPNLTNFEFMCFMVFWVACLPFLWFPPDKLRHIFALKSAITPFAAFGFLIWTLCKAKGHLALGSLNDNGGAISKTVLAWSVIRAIMSALDNFSTLILNAPDFTRFGKTYKSSVYSQLIALPVCYAIISLIGILSVSAAYTLYGVNYWSPLDILNRYLDNYTSGNRAGVFLISFIFAFDQLGANLSGNSIPAGTDLTALLPKFINIRRGSYICALISLAICPWDLLSSSSKFTTALAAYAVFLSAIAGVISADYFIVRKGYVNIFHCYTDKPGSYYMYNKYGTNWRAVVAYIFGIAPNFAGFLGSVGVSVPIGAMKVYYLNYFVGYLLAALSYCILVYFYPIKGIPGDAKITDRKWLEEWVEVEEFGTEREAFEEYGGVSTGYEKIRYI</sequence>
<proteinExistence type="evidence at protein level"/>
<accession>P38196</accession>
<accession>D6VPV6</accession>
<feature type="chain" id="PRO_0000197923" description="Uridine permease">
    <location>
        <begin position="1"/>
        <end position="639"/>
    </location>
</feature>
<feature type="topological domain" description="Cytoplasmic" evidence="1">
    <location>
        <begin position="1"/>
        <end position="162"/>
    </location>
</feature>
<feature type="transmembrane region" description="Helical" evidence="1">
    <location>
        <begin position="163"/>
        <end position="180"/>
    </location>
</feature>
<feature type="topological domain" description="Extracellular" evidence="1">
    <location>
        <begin position="181"/>
        <end position="200"/>
    </location>
</feature>
<feature type="transmembrane region" description="Helical" evidence="1">
    <location>
        <begin position="201"/>
        <end position="225"/>
    </location>
</feature>
<feature type="topological domain" description="Cytoplasmic" evidence="1">
    <location>
        <begin position="226"/>
        <end position="259"/>
    </location>
</feature>
<feature type="transmembrane region" description="Helical" evidence="1">
    <location>
        <begin position="260"/>
        <end position="276"/>
    </location>
</feature>
<feature type="topological domain" description="Extracellular" evidence="1">
    <location>
        <begin position="277"/>
        <end position="283"/>
    </location>
</feature>
<feature type="transmembrane region" description="Helical" evidence="1">
    <location>
        <begin position="284"/>
        <end position="305"/>
    </location>
</feature>
<feature type="topological domain" description="Cytoplasmic" evidence="1">
    <location>
        <begin position="306"/>
        <end position="367"/>
    </location>
</feature>
<feature type="transmembrane region" description="Helical" evidence="1">
    <location>
        <begin position="368"/>
        <end position="392"/>
    </location>
</feature>
<feature type="topological domain" description="Extracellular" evidence="1">
    <location>
        <begin position="393"/>
        <end position="416"/>
    </location>
</feature>
<feature type="transmembrane region" description="Helical" evidence="1">
    <location>
        <begin position="417"/>
        <end position="435"/>
    </location>
</feature>
<feature type="topological domain" description="Cytoplasmic" evidence="1">
    <location>
        <begin position="436"/>
        <end position="460"/>
    </location>
</feature>
<feature type="transmembrane region" description="Helical" evidence="1">
    <location>
        <begin position="461"/>
        <end position="477"/>
    </location>
</feature>
<feature type="topological domain" description="Extracellular" evidence="1">
    <location>
        <begin position="478"/>
        <end position="483"/>
    </location>
</feature>
<feature type="transmembrane region" description="Helical" evidence="1">
    <location>
        <begin position="484"/>
        <end position="507"/>
    </location>
</feature>
<feature type="topological domain" description="Cytoplasmic" evidence="1">
    <location>
        <begin position="508"/>
        <end position="537"/>
    </location>
</feature>
<feature type="transmembrane region" description="Helical" evidence="1">
    <location>
        <begin position="538"/>
        <end position="562"/>
    </location>
</feature>
<feature type="topological domain" description="Extracellular" evidence="1">
    <location>
        <begin position="563"/>
        <end position="572"/>
    </location>
</feature>
<feature type="transmembrane region" description="Helical" evidence="1">
    <location>
        <begin position="573"/>
        <end position="590"/>
    </location>
</feature>
<feature type="topological domain" description="Cytoplasmic" evidence="1">
    <location>
        <begin position="591"/>
        <end position="639"/>
    </location>
</feature>
<feature type="region of interest" description="Disordered" evidence="2">
    <location>
        <begin position="1"/>
        <end position="37"/>
    </location>
</feature>
<feature type="modified residue" description="Phosphothreonine" evidence="4">
    <location>
        <position position="54"/>
    </location>
</feature>
<feature type="modified residue" description="Phosphoserine" evidence="4">
    <location>
        <position position="56"/>
    </location>
</feature>
<feature type="cross-link" description="Glycyl lysine isopeptide (Lys-Gly) (interchain with G-Cter in ubiquitin)" evidence="5">
    <location>
        <position position="635"/>
    </location>
</feature>
<reference key="1">
    <citation type="journal article" date="1994" name="Yeast">
        <title>The sequence of a 22.4 kb DNA fragment from the left arm of yeast chromosome II reveals homologues to bacterial proline synthetase and murine alpha-adaptin, as well as a new permease and a DNA-binding protein.</title>
        <authorList>
            <person name="de Wergifosse P."/>
            <person name="Jacques B."/>
            <person name="Jonniaux J.-L."/>
            <person name="Purnelle B."/>
            <person name="Skala J."/>
            <person name="Goffeau A."/>
        </authorList>
    </citation>
    <scope>NUCLEOTIDE SEQUENCE [GENOMIC DNA]</scope>
    <source>
        <strain>ATCC 204508 / S288c</strain>
    </source>
</reference>
<reference key="2">
    <citation type="journal article" date="1994" name="EMBO J.">
        <title>Complete DNA sequence of yeast chromosome II.</title>
        <authorList>
            <person name="Feldmann H."/>
            <person name="Aigle M."/>
            <person name="Aljinovic G."/>
            <person name="Andre B."/>
            <person name="Baclet M.C."/>
            <person name="Barthe C."/>
            <person name="Baur A."/>
            <person name="Becam A.-M."/>
            <person name="Biteau N."/>
            <person name="Boles E."/>
            <person name="Brandt T."/>
            <person name="Brendel M."/>
            <person name="Brueckner M."/>
            <person name="Bussereau F."/>
            <person name="Christiansen C."/>
            <person name="Contreras R."/>
            <person name="Crouzet M."/>
            <person name="Cziepluch C."/>
            <person name="Demolis N."/>
            <person name="Delaveau T."/>
            <person name="Doignon F."/>
            <person name="Domdey H."/>
            <person name="Duesterhus S."/>
            <person name="Dubois E."/>
            <person name="Dujon B."/>
            <person name="El Bakkoury M."/>
            <person name="Entian K.-D."/>
            <person name="Feuermann M."/>
            <person name="Fiers W."/>
            <person name="Fobo G.M."/>
            <person name="Fritz C."/>
            <person name="Gassenhuber J."/>
            <person name="Glansdorff N."/>
            <person name="Goffeau A."/>
            <person name="Grivell L.A."/>
            <person name="de Haan M."/>
            <person name="Hein C."/>
            <person name="Herbert C.J."/>
            <person name="Hollenberg C.P."/>
            <person name="Holmstroem K."/>
            <person name="Jacq C."/>
            <person name="Jacquet M."/>
            <person name="Jauniaux J.-C."/>
            <person name="Jonniaux J.-L."/>
            <person name="Kallesoee T."/>
            <person name="Kiesau P."/>
            <person name="Kirchrath L."/>
            <person name="Koetter P."/>
            <person name="Korol S."/>
            <person name="Liebl S."/>
            <person name="Logghe M."/>
            <person name="Lohan A.J.E."/>
            <person name="Louis E.J."/>
            <person name="Li Z.Y."/>
            <person name="Maat M.J."/>
            <person name="Mallet L."/>
            <person name="Mannhaupt G."/>
            <person name="Messenguy F."/>
            <person name="Miosga T."/>
            <person name="Molemans F."/>
            <person name="Mueller S."/>
            <person name="Nasr F."/>
            <person name="Obermaier B."/>
            <person name="Perea J."/>
            <person name="Pierard A."/>
            <person name="Piravandi E."/>
            <person name="Pohl F.M."/>
            <person name="Pohl T.M."/>
            <person name="Potier S."/>
            <person name="Proft M."/>
            <person name="Purnelle B."/>
            <person name="Ramezani Rad M."/>
            <person name="Rieger M."/>
            <person name="Rose M."/>
            <person name="Schaaff-Gerstenschlaeger I."/>
            <person name="Scherens B."/>
            <person name="Schwarzlose C."/>
            <person name="Skala J."/>
            <person name="Slonimski P.P."/>
            <person name="Smits P.H.M."/>
            <person name="Souciet J.-L."/>
            <person name="Steensma H.Y."/>
            <person name="Stucka R."/>
            <person name="Urrestarazu L.A."/>
            <person name="van der Aart Q.J.M."/>
            <person name="Van Dyck L."/>
            <person name="Vassarotti A."/>
            <person name="Vetter I."/>
            <person name="Vierendeels F."/>
            <person name="Vissers S."/>
            <person name="Wagner G."/>
            <person name="de Wergifosse P."/>
            <person name="Wolfe K.H."/>
            <person name="Zagulski M."/>
            <person name="Zimmermann F.K."/>
            <person name="Mewes H.-W."/>
            <person name="Kleine K."/>
        </authorList>
    </citation>
    <scope>NUCLEOTIDE SEQUENCE [LARGE SCALE GENOMIC DNA]</scope>
    <source>
        <strain>ATCC 204508 / S288c</strain>
    </source>
</reference>
<reference key="3">
    <citation type="journal article" date="2014" name="G3 (Bethesda)">
        <title>The reference genome sequence of Saccharomyces cerevisiae: Then and now.</title>
        <authorList>
            <person name="Engel S.R."/>
            <person name="Dietrich F.S."/>
            <person name="Fisk D.G."/>
            <person name="Binkley G."/>
            <person name="Balakrishnan R."/>
            <person name="Costanzo M.C."/>
            <person name="Dwight S.S."/>
            <person name="Hitz B.C."/>
            <person name="Karra K."/>
            <person name="Nash R.S."/>
            <person name="Weng S."/>
            <person name="Wong E.D."/>
            <person name="Lloyd P."/>
            <person name="Skrzypek M.S."/>
            <person name="Miyasato S.R."/>
            <person name="Simison M."/>
            <person name="Cherry J.M."/>
        </authorList>
    </citation>
    <scope>GENOME REANNOTATION</scope>
    <source>
        <strain>ATCC 204508 / S288c</strain>
    </source>
</reference>
<reference key="4">
    <citation type="journal article" date="1998" name="FEMS Microbiol. Lett.">
        <title>The ORF YBL042 of Saccharomyces cerevisiae encodes a uridine permease.</title>
        <authorList>
            <person name="Wagner R."/>
            <person name="de Montigny J."/>
            <person name="de Wergifosse P."/>
            <person name="Souciet J.-L."/>
            <person name="Potier S."/>
        </authorList>
    </citation>
    <scope>CHARACTERIZATION</scope>
</reference>
<reference key="5">
    <citation type="journal article" date="2000" name="J. Biol. Chem.">
        <title>Nucleoside transporter proteins of Saccharomyces cerevisiae. Demonstration of a transporter (FUI1) with high uridine selectivity in plasma membranes and a transporter (FUN26) with broad nucleoside selectivity in intracellular membranes.</title>
        <authorList>
            <person name="Vickers M.F."/>
            <person name="Yao S.Y."/>
            <person name="Baldwin S.A."/>
            <person name="Young J.D."/>
            <person name="Cass C.E."/>
        </authorList>
    </citation>
    <scope>CHARACTERIZATION</scope>
</reference>
<reference key="6">
    <citation type="journal article" date="2006" name="Proc. Natl. Acad. Sci. U.S.A.">
        <title>A global topology map of the Saccharomyces cerevisiae membrane proteome.</title>
        <authorList>
            <person name="Kim H."/>
            <person name="Melen K."/>
            <person name="Oesterberg M."/>
            <person name="von Heijne G."/>
        </authorList>
    </citation>
    <scope>TOPOLOGY [LARGE SCALE ANALYSIS]</scope>
    <source>
        <strain>ATCC 208353 / W303-1A</strain>
    </source>
</reference>
<reference key="7">
    <citation type="journal article" date="2007" name="J. Proteome Res.">
        <title>Large-scale phosphorylation analysis of alpha-factor-arrested Saccharomyces cerevisiae.</title>
        <authorList>
            <person name="Li X."/>
            <person name="Gerber S.A."/>
            <person name="Rudner A.D."/>
            <person name="Beausoleil S.A."/>
            <person name="Haas W."/>
            <person name="Villen J."/>
            <person name="Elias J.E."/>
            <person name="Gygi S.P."/>
        </authorList>
    </citation>
    <scope>PHOSPHORYLATION [LARGE SCALE ANALYSIS] AT THR-54 AND SER-56</scope>
    <scope>IDENTIFICATION BY MASS SPECTROMETRY [LARGE SCALE ANALYSIS]</scope>
    <source>
        <strain>ADR376</strain>
    </source>
</reference>
<reference key="8">
    <citation type="journal article" date="2009" name="Science">
        <title>Global analysis of Cdk1 substrate phosphorylation sites provides insights into evolution.</title>
        <authorList>
            <person name="Holt L.J."/>
            <person name="Tuch B.B."/>
            <person name="Villen J."/>
            <person name="Johnson A.D."/>
            <person name="Gygi S.P."/>
            <person name="Morgan D.O."/>
        </authorList>
    </citation>
    <scope>IDENTIFICATION BY MASS SPECTROMETRY [LARGE SCALE ANALYSIS]</scope>
</reference>
<reference key="9">
    <citation type="journal article" date="2012" name="Proteomics">
        <title>Sites of ubiquitin attachment in Saccharomyces cerevisiae.</title>
        <authorList>
            <person name="Starita L.M."/>
            <person name="Lo R.S."/>
            <person name="Eng J.K."/>
            <person name="von Haller P.D."/>
            <person name="Fields S."/>
        </authorList>
    </citation>
    <scope>UBIQUITINATION [LARGE SCALE ANALYSIS] AT LYS-635</scope>
    <scope>IDENTIFICATION BY MASS SPECTROMETRY [LARGE SCALE ANALYSIS]</scope>
</reference>
<name>FUI1_YEAST</name>
<gene>
    <name type="primary">FUI1</name>
    <name type="ordered locus">YBL042C</name>
    <name type="ORF">YBL0406</name>
</gene>
<keyword id="KW-1017">Isopeptide bond</keyword>
<keyword id="KW-0472">Membrane</keyword>
<keyword id="KW-0597">Phosphoprotein</keyword>
<keyword id="KW-1185">Reference proteome</keyword>
<keyword id="KW-0812">Transmembrane</keyword>
<keyword id="KW-1133">Transmembrane helix</keyword>
<keyword id="KW-0813">Transport</keyword>
<keyword id="KW-0832">Ubl conjugation</keyword>
<evidence type="ECO:0000255" key="1"/>
<evidence type="ECO:0000256" key="2">
    <source>
        <dbReference type="SAM" id="MobiDB-lite"/>
    </source>
</evidence>
<evidence type="ECO:0000305" key="3"/>
<evidence type="ECO:0007744" key="4">
    <source>
    </source>
</evidence>
<evidence type="ECO:0007744" key="5">
    <source>
    </source>
</evidence>
<protein>
    <recommendedName>
        <fullName>Uridine permease</fullName>
    </recommendedName>
</protein>
<comment type="function">
    <text>High-affinity transport of uridine.</text>
</comment>
<comment type="subcellular location">
    <subcellularLocation>
        <location>Membrane</location>
        <topology>Multi-pass membrane protein</topology>
    </subcellularLocation>
</comment>
<comment type="similarity">
    <text evidence="3">Belongs to the purine-cytosine permease (2.A.39) family.</text>
</comment>
<organism>
    <name type="scientific">Saccharomyces cerevisiae (strain ATCC 204508 / S288c)</name>
    <name type="common">Baker's yeast</name>
    <dbReference type="NCBI Taxonomy" id="559292"/>
    <lineage>
        <taxon>Eukaryota</taxon>
        <taxon>Fungi</taxon>
        <taxon>Dikarya</taxon>
        <taxon>Ascomycota</taxon>
        <taxon>Saccharomycotina</taxon>
        <taxon>Saccharomycetes</taxon>
        <taxon>Saccharomycetales</taxon>
        <taxon>Saccharomycetaceae</taxon>
        <taxon>Saccharomyces</taxon>
    </lineage>
</organism>
<dbReference type="EMBL" id="X78214">
    <property type="protein sequence ID" value="CAA55059.1"/>
    <property type="molecule type" value="Genomic_DNA"/>
</dbReference>
<dbReference type="EMBL" id="Z35803">
    <property type="protein sequence ID" value="CAA84862.1"/>
    <property type="molecule type" value="Genomic_DNA"/>
</dbReference>
<dbReference type="EMBL" id="BK006936">
    <property type="protein sequence ID" value="DAA07076.1"/>
    <property type="molecule type" value="Genomic_DNA"/>
</dbReference>
<dbReference type="PIR" id="S45776">
    <property type="entry name" value="S45776"/>
</dbReference>
<dbReference type="RefSeq" id="NP_009511.1">
    <property type="nucleotide sequence ID" value="NM_001178282.1"/>
</dbReference>
<dbReference type="SMR" id="P38196"/>
<dbReference type="BioGRID" id="32655">
    <property type="interactions" value="56"/>
</dbReference>
<dbReference type="DIP" id="DIP-1321N"/>
<dbReference type="FunCoup" id="P38196">
    <property type="interactions" value="773"/>
</dbReference>
<dbReference type="IntAct" id="P38196">
    <property type="interactions" value="6"/>
</dbReference>
<dbReference type="MINT" id="P38196"/>
<dbReference type="STRING" id="4932.YBL042C"/>
<dbReference type="TCDB" id="2.A.39.3.3">
    <property type="family name" value="the nucleobase:cation symporter-1 (ncs1) family"/>
</dbReference>
<dbReference type="iPTMnet" id="P38196"/>
<dbReference type="PaxDb" id="4932-YBL042C"/>
<dbReference type="PeptideAtlas" id="P38196"/>
<dbReference type="EnsemblFungi" id="YBL042C_mRNA">
    <property type="protein sequence ID" value="YBL042C"/>
    <property type="gene ID" value="YBL042C"/>
</dbReference>
<dbReference type="GeneID" id="852238"/>
<dbReference type="KEGG" id="sce:YBL042C"/>
<dbReference type="AGR" id="SGD:S000000138"/>
<dbReference type="SGD" id="S000000138">
    <property type="gene designation" value="FUI1"/>
</dbReference>
<dbReference type="VEuPathDB" id="FungiDB:YBL042C"/>
<dbReference type="eggNOG" id="KOG2466">
    <property type="taxonomic scope" value="Eukaryota"/>
</dbReference>
<dbReference type="GeneTree" id="ENSGT00940000176299"/>
<dbReference type="HOGENOM" id="CLU_021555_2_2_1"/>
<dbReference type="InParanoid" id="P38196"/>
<dbReference type="OMA" id="GWNWRAV"/>
<dbReference type="OrthoDB" id="2018619at2759"/>
<dbReference type="BioCyc" id="YEAST:G3O-28943-MONOMER"/>
<dbReference type="BioGRID-ORCS" id="852238">
    <property type="hits" value="1 hit in 10 CRISPR screens"/>
</dbReference>
<dbReference type="PRO" id="PR:P38196"/>
<dbReference type="Proteomes" id="UP000002311">
    <property type="component" value="Chromosome II"/>
</dbReference>
<dbReference type="RNAct" id="P38196">
    <property type="molecule type" value="protein"/>
</dbReference>
<dbReference type="GO" id="GO:0071944">
    <property type="term" value="C:cell periphery"/>
    <property type="evidence" value="ECO:0007005"/>
    <property type="project" value="SGD"/>
</dbReference>
<dbReference type="GO" id="GO:0000324">
    <property type="term" value="C:fungal-type vacuole"/>
    <property type="evidence" value="ECO:0007005"/>
    <property type="project" value="SGD"/>
</dbReference>
<dbReference type="GO" id="GO:0005886">
    <property type="term" value="C:plasma membrane"/>
    <property type="evidence" value="ECO:0000314"/>
    <property type="project" value="SGD"/>
</dbReference>
<dbReference type="GO" id="GO:0015205">
    <property type="term" value="F:nucleobase transmembrane transporter activity"/>
    <property type="evidence" value="ECO:0000318"/>
    <property type="project" value="GO_Central"/>
</dbReference>
<dbReference type="GO" id="GO:0015213">
    <property type="term" value="F:uridine transmembrane transporter activity"/>
    <property type="evidence" value="ECO:0000314"/>
    <property type="project" value="SGD"/>
</dbReference>
<dbReference type="GO" id="GO:0015851">
    <property type="term" value="P:nucleobase transport"/>
    <property type="evidence" value="ECO:0000318"/>
    <property type="project" value="GO_Central"/>
</dbReference>
<dbReference type="GO" id="GO:0055085">
    <property type="term" value="P:transmembrane transport"/>
    <property type="evidence" value="ECO:0000315"/>
    <property type="project" value="SGD"/>
</dbReference>
<dbReference type="GO" id="GO:0015862">
    <property type="term" value="P:uridine transmembrane transport"/>
    <property type="evidence" value="ECO:0000314"/>
    <property type="project" value="SGD"/>
</dbReference>
<dbReference type="CDD" id="cd11482">
    <property type="entry name" value="SLC-NCS1sbd_NRT1-like"/>
    <property type="match status" value="1"/>
</dbReference>
<dbReference type="FunFam" id="1.10.4160.10:FF:000001">
    <property type="entry name" value="Uracil permease, putative"/>
    <property type="match status" value="1"/>
</dbReference>
<dbReference type="Gene3D" id="1.10.4160.10">
    <property type="entry name" value="Hydantoin permease"/>
    <property type="match status" value="1"/>
</dbReference>
<dbReference type="InterPro" id="IPR012681">
    <property type="entry name" value="NCS1"/>
</dbReference>
<dbReference type="InterPro" id="IPR001248">
    <property type="entry name" value="Pur-cyt_permease"/>
</dbReference>
<dbReference type="InterPro" id="IPR045225">
    <property type="entry name" value="Uracil/uridine/allantoin_perm"/>
</dbReference>
<dbReference type="NCBIfam" id="TIGR00800">
    <property type="entry name" value="ncs1"/>
    <property type="match status" value="1"/>
</dbReference>
<dbReference type="PANTHER" id="PTHR30618">
    <property type="entry name" value="NCS1 FAMILY PURINE/PYRIMIDINE TRANSPORTER"/>
    <property type="match status" value="1"/>
</dbReference>
<dbReference type="PANTHER" id="PTHR30618:SF5">
    <property type="entry name" value="URIDINE PERMEASE"/>
    <property type="match status" value="1"/>
</dbReference>
<dbReference type="Pfam" id="PF02133">
    <property type="entry name" value="Transp_cyt_pur"/>
    <property type="match status" value="1"/>
</dbReference>